<organism>
    <name type="scientific">Drosophila melanogaster</name>
    <name type="common">Fruit fly</name>
    <dbReference type="NCBI Taxonomy" id="7227"/>
    <lineage>
        <taxon>Eukaryota</taxon>
        <taxon>Metazoa</taxon>
        <taxon>Ecdysozoa</taxon>
        <taxon>Arthropoda</taxon>
        <taxon>Hexapoda</taxon>
        <taxon>Insecta</taxon>
        <taxon>Pterygota</taxon>
        <taxon>Neoptera</taxon>
        <taxon>Endopterygota</taxon>
        <taxon>Diptera</taxon>
        <taxon>Brachycera</taxon>
        <taxon>Muscomorpha</taxon>
        <taxon>Ephydroidea</taxon>
        <taxon>Drosophilidae</taxon>
        <taxon>Drosophila</taxon>
        <taxon>Sophophora</taxon>
    </lineage>
</organism>
<gene>
    <name type="ORF">CG5382</name>
</gene>
<name>ZFPL1_DROME</name>
<comment type="subcellular location">
    <subcellularLocation>
        <location evidence="5">Membrane</location>
        <topology evidence="5">Single-pass membrane protein</topology>
    </subcellularLocation>
</comment>
<comment type="similarity">
    <text evidence="5">Belongs to the ZFPL1 family.</text>
</comment>
<feature type="chain" id="PRO_0000355179" description="Zinc finger protein-like 1 homolog">
    <location>
        <begin position="1"/>
        <end position="299"/>
    </location>
</feature>
<feature type="transmembrane region" description="Helical" evidence="1">
    <location>
        <begin position="256"/>
        <end position="276"/>
    </location>
</feature>
<feature type="zinc finger region" description="B box-type; degenerate">
    <location>
        <begin position="1"/>
        <end position="43"/>
    </location>
</feature>
<feature type="zinc finger region" description="RING-type; atypical" evidence="2">
    <location>
        <begin position="53"/>
        <end position="101"/>
    </location>
</feature>
<feature type="region of interest" description="Disordered" evidence="3">
    <location>
        <begin position="200"/>
        <end position="231"/>
    </location>
</feature>
<feature type="modified residue" description="Phosphoserine" evidence="4">
    <location>
        <position position="215"/>
    </location>
</feature>
<accession>Q9VD26</accession>
<reference key="1">
    <citation type="journal article" date="2000" name="Science">
        <title>The genome sequence of Drosophila melanogaster.</title>
        <authorList>
            <person name="Adams M.D."/>
            <person name="Celniker S.E."/>
            <person name="Holt R.A."/>
            <person name="Evans C.A."/>
            <person name="Gocayne J.D."/>
            <person name="Amanatides P.G."/>
            <person name="Scherer S.E."/>
            <person name="Li P.W."/>
            <person name="Hoskins R.A."/>
            <person name="Galle R.F."/>
            <person name="George R.A."/>
            <person name="Lewis S.E."/>
            <person name="Richards S."/>
            <person name="Ashburner M."/>
            <person name="Henderson S.N."/>
            <person name="Sutton G.G."/>
            <person name="Wortman J.R."/>
            <person name="Yandell M.D."/>
            <person name="Zhang Q."/>
            <person name="Chen L.X."/>
            <person name="Brandon R.C."/>
            <person name="Rogers Y.-H.C."/>
            <person name="Blazej R.G."/>
            <person name="Champe M."/>
            <person name="Pfeiffer B.D."/>
            <person name="Wan K.H."/>
            <person name="Doyle C."/>
            <person name="Baxter E.G."/>
            <person name="Helt G."/>
            <person name="Nelson C.R."/>
            <person name="Miklos G.L.G."/>
            <person name="Abril J.F."/>
            <person name="Agbayani A."/>
            <person name="An H.-J."/>
            <person name="Andrews-Pfannkoch C."/>
            <person name="Baldwin D."/>
            <person name="Ballew R.M."/>
            <person name="Basu A."/>
            <person name="Baxendale J."/>
            <person name="Bayraktaroglu L."/>
            <person name="Beasley E.M."/>
            <person name="Beeson K.Y."/>
            <person name="Benos P.V."/>
            <person name="Berman B.P."/>
            <person name="Bhandari D."/>
            <person name="Bolshakov S."/>
            <person name="Borkova D."/>
            <person name="Botchan M.R."/>
            <person name="Bouck J."/>
            <person name="Brokstein P."/>
            <person name="Brottier P."/>
            <person name="Burtis K.C."/>
            <person name="Busam D.A."/>
            <person name="Butler H."/>
            <person name="Cadieu E."/>
            <person name="Center A."/>
            <person name="Chandra I."/>
            <person name="Cherry J.M."/>
            <person name="Cawley S."/>
            <person name="Dahlke C."/>
            <person name="Davenport L.B."/>
            <person name="Davies P."/>
            <person name="de Pablos B."/>
            <person name="Delcher A."/>
            <person name="Deng Z."/>
            <person name="Mays A.D."/>
            <person name="Dew I."/>
            <person name="Dietz S.M."/>
            <person name="Dodson K."/>
            <person name="Doup L.E."/>
            <person name="Downes M."/>
            <person name="Dugan-Rocha S."/>
            <person name="Dunkov B.C."/>
            <person name="Dunn P."/>
            <person name="Durbin K.J."/>
            <person name="Evangelista C.C."/>
            <person name="Ferraz C."/>
            <person name="Ferriera S."/>
            <person name="Fleischmann W."/>
            <person name="Fosler C."/>
            <person name="Gabrielian A.E."/>
            <person name="Garg N.S."/>
            <person name="Gelbart W.M."/>
            <person name="Glasser K."/>
            <person name="Glodek A."/>
            <person name="Gong F."/>
            <person name="Gorrell J.H."/>
            <person name="Gu Z."/>
            <person name="Guan P."/>
            <person name="Harris M."/>
            <person name="Harris N.L."/>
            <person name="Harvey D.A."/>
            <person name="Heiman T.J."/>
            <person name="Hernandez J.R."/>
            <person name="Houck J."/>
            <person name="Hostin D."/>
            <person name="Houston K.A."/>
            <person name="Howland T.J."/>
            <person name="Wei M.-H."/>
            <person name="Ibegwam C."/>
            <person name="Jalali M."/>
            <person name="Kalush F."/>
            <person name="Karpen G.H."/>
            <person name="Ke Z."/>
            <person name="Kennison J.A."/>
            <person name="Ketchum K.A."/>
            <person name="Kimmel B.E."/>
            <person name="Kodira C.D."/>
            <person name="Kraft C.L."/>
            <person name="Kravitz S."/>
            <person name="Kulp D."/>
            <person name="Lai Z."/>
            <person name="Lasko P."/>
            <person name="Lei Y."/>
            <person name="Levitsky A.A."/>
            <person name="Li J.H."/>
            <person name="Li Z."/>
            <person name="Liang Y."/>
            <person name="Lin X."/>
            <person name="Liu X."/>
            <person name="Mattei B."/>
            <person name="McIntosh T.C."/>
            <person name="McLeod M.P."/>
            <person name="McPherson D."/>
            <person name="Merkulov G."/>
            <person name="Milshina N.V."/>
            <person name="Mobarry C."/>
            <person name="Morris J."/>
            <person name="Moshrefi A."/>
            <person name="Mount S.M."/>
            <person name="Moy M."/>
            <person name="Murphy B."/>
            <person name="Murphy L."/>
            <person name="Muzny D.M."/>
            <person name="Nelson D.L."/>
            <person name="Nelson D.R."/>
            <person name="Nelson K.A."/>
            <person name="Nixon K."/>
            <person name="Nusskern D.R."/>
            <person name="Pacleb J.M."/>
            <person name="Palazzolo M."/>
            <person name="Pittman G.S."/>
            <person name="Pan S."/>
            <person name="Pollard J."/>
            <person name="Puri V."/>
            <person name="Reese M.G."/>
            <person name="Reinert K."/>
            <person name="Remington K."/>
            <person name="Saunders R.D.C."/>
            <person name="Scheeler F."/>
            <person name="Shen H."/>
            <person name="Shue B.C."/>
            <person name="Siden-Kiamos I."/>
            <person name="Simpson M."/>
            <person name="Skupski M.P."/>
            <person name="Smith T.J."/>
            <person name="Spier E."/>
            <person name="Spradling A.C."/>
            <person name="Stapleton M."/>
            <person name="Strong R."/>
            <person name="Sun E."/>
            <person name="Svirskas R."/>
            <person name="Tector C."/>
            <person name="Turner R."/>
            <person name="Venter E."/>
            <person name="Wang A.H."/>
            <person name="Wang X."/>
            <person name="Wang Z.-Y."/>
            <person name="Wassarman D.A."/>
            <person name="Weinstock G.M."/>
            <person name="Weissenbach J."/>
            <person name="Williams S.M."/>
            <person name="Woodage T."/>
            <person name="Worley K.C."/>
            <person name="Wu D."/>
            <person name="Yang S."/>
            <person name="Yao Q.A."/>
            <person name="Ye J."/>
            <person name="Yeh R.-F."/>
            <person name="Zaveri J.S."/>
            <person name="Zhan M."/>
            <person name="Zhang G."/>
            <person name="Zhao Q."/>
            <person name="Zheng L."/>
            <person name="Zheng X.H."/>
            <person name="Zhong F.N."/>
            <person name="Zhong W."/>
            <person name="Zhou X."/>
            <person name="Zhu S.C."/>
            <person name="Zhu X."/>
            <person name="Smith H.O."/>
            <person name="Gibbs R.A."/>
            <person name="Myers E.W."/>
            <person name="Rubin G.M."/>
            <person name="Venter J.C."/>
        </authorList>
    </citation>
    <scope>NUCLEOTIDE SEQUENCE [LARGE SCALE GENOMIC DNA]</scope>
    <source>
        <strain>Berkeley</strain>
    </source>
</reference>
<reference key="2">
    <citation type="journal article" date="2002" name="Genome Biol.">
        <title>Annotation of the Drosophila melanogaster euchromatic genome: a systematic review.</title>
        <authorList>
            <person name="Misra S."/>
            <person name="Crosby M.A."/>
            <person name="Mungall C.J."/>
            <person name="Matthews B.B."/>
            <person name="Campbell K.S."/>
            <person name="Hradecky P."/>
            <person name="Huang Y."/>
            <person name="Kaminker J.S."/>
            <person name="Millburn G.H."/>
            <person name="Prochnik S.E."/>
            <person name="Smith C.D."/>
            <person name="Tupy J.L."/>
            <person name="Whitfield E.J."/>
            <person name="Bayraktaroglu L."/>
            <person name="Berman B.P."/>
            <person name="Bettencourt B.R."/>
            <person name="Celniker S.E."/>
            <person name="de Grey A.D.N.J."/>
            <person name="Drysdale R.A."/>
            <person name="Harris N.L."/>
            <person name="Richter J."/>
            <person name="Russo S."/>
            <person name="Schroeder A.J."/>
            <person name="Shu S.Q."/>
            <person name="Stapleton M."/>
            <person name="Yamada C."/>
            <person name="Ashburner M."/>
            <person name="Gelbart W.M."/>
            <person name="Rubin G.M."/>
            <person name="Lewis S.E."/>
        </authorList>
    </citation>
    <scope>GENOME REANNOTATION</scope>
    <source>
        <strain>Berkeley</strain>
    </source>
</reference>
<reference key="3">
    <citation type="journal article" date="2002" name="Genome Biol.">
        <title>A Drosophila full-length cDNA resource.</title>
        <authorList>
            <person name="Stapleton M."/>
            <person name="Carlson J.W."/>
            <person name="Brokstein P."/>
            <person name="Yu C."/>
            <person name="Champe M."/>
            <person name="George R.A."/>
            <person name="Guarin H."/>
            <person name="Kronmiller B."/>
            <person name="Pacleb J.M."/>
            <person name="Park S."/>
            <person name="Wan K.H."/>
            <person name="Rubin G.M."/>
            <person name="Celniker S.E."/>
        </authorList>
    </citation>
    <scope>NUCLEOTIDE SEQUENCE [LARGE SCALE MRNA]</scope>
    <source>
        <strain>Berkeley</strain>
        <tissue>Embryo</tissue>
    </source>
</reference>
<reference key="4">
    <citation type="journal article" date="2008" name="J. Proteome Res.">
        <title>Phosphoproteome analysis of Drosophila melanogaster embryos.</title>
        <authorList>
            <person name="Zhai B."/>
            <person name="Villen J."/>
            <person name="Beausoleil S.A."/>
            <person name="Mintseris J."/>
            <person name="Gygi S.P."/>
        </authorList>
    </citation>
    <scope>PHOSPHORYLATION [LARGE SCALE ANALYSIS] AT SER-215</scope>
    <scope>IDENTIFICATION BY MASS SPECTROMETRY</scope>
    <source>
        <tissue>Embryo</tissue>
    </source>
</reference>
<evidence type="ECO:0000255" key="1"/>
<evidence type="ECO:0000255" key="2">
    <source>
        <dbReference type="PROSITE-ProRule" id="PRU00175"/>
    </source>
</evidence>
<evidence type="ECO:0000256" key="3">
    <source>
        <dbReference type="SAM" id="MobiDB-lite"/>
    </source>
</evidence>
<evidence type="ECO:0000269" key="4">
    <source>
    </source>
</evidence>
<evidence type="ECO:0000305" key="5"/>
<sequence>MGLCKCPKRLVTNQFCFEHRVNVCEHCMVQSHPKCIVQSYLQWLRDSDYISNCTLCGTTLEQGDCVRLVCYHVFHWDCLNARQAALPANTAPRGHQCPACSVEIFPNANLVSPVADALKSFLSQVNWGRNGLGLALLSEEQSSSLKAIKPKVASQAAVSNMTKVHHIHSGGERERTKPNGHDAVSPHSVLLMDAFNPPSAGDYASSRRPLLPRQSPIGGTDRDDNKYQRRTPAELFSRWTRRFYAPSSRPPWRRTWFLVTAGILAFVLFVYLMAWLGRGGSDAVDEGWNNPNPQPNHYE</sequence>
<protein>
    <recommendedName>
        <fullName>Zinc finger protein-like 1 homolog</fullName>
    </recommendedName>
</protein>
<dbReference type="EMBL" id="AE014297">
    <property type="protein sequence ID" value="AAF55977.1"/>
    <property type="molecule type" value="Genomic_DNA"/>
</dbReference>
<dbReference type="EMBL" id="AY071252">
    <property type="protein sequence ID" value="AAL48874.1"/>
    <property type="molecule type" value="mRNA"/>
</dbReference>
<dbReference type="RefSeq" id="NP_732721.1">
    <property type="nucleotide sequence ID" value="NM_170003.3"/>
</dbReference>
<dbReference type="BioGRID" id="67576">
    <property type="interactions" value="18"/>
</dbReference>
<dbReference type="FunCoup" id="Q9VD26">
    <property type="interactions" value="1317"/>
</dbReference>
<dbReference type="IntAct" id="Q9VD26">
    <property type="interactions" value="18"/>
</dbReference>
<dbReference type="STRING" id="7227.FBpp0083630"/>
<dbReference type="iPTMnet" id="Q9VD26"/>
<dbReference type="PaxDb" id="7227-FBpp0083630"/>
<dbReference type="DNASU" id="42618"/>
<dbReference type="EnsemblMetazoa" id="FBtr0084237">
    <property type="protein sequence ID" value="FBpp0083630"/>
    <property type="gene ID" value="FBgn0038950"/>
</dbReference>
<dbReference type="GeneID" id="42618"/>
<dbReference type="KEGG" id="dme:Dmel_CG5382"/>
<dbReference type="UCSC" id="CG5382-RB">
    <property type="organism name" value="d. melanogaster"/>
</dbReference>
<dbReference type="AGR" id="FB:FBgn0038950"/>
<dbReference type="FlyBase" id="FBgn0038950">
    <property type="gene designation" value="CG5382"/>
</dbReference>
<dbReference type="VEuPathDB" id="VectorBase:FBgn0038950"/>
<dbReference type="eggNOG" id="KOG3970">
    <property type="taxonomic scope" value="Eukaryota"/>
</dbReference>
<dbReference type="GeneTree" id="ENSGT00390000009753"/>
<dbReference type="HOGENOM" id="CLU_075387_0_0_1"/>
<dbReference type="InParanoid" id="Q9VD26"/>
<dbReference type="OMA" id="HDHDYNP"/>
<dbReference type="OrthoDB" id="1916590at2759"/>
<dbReference type="PhylomeDB" id="Q9VD26"/>
<dbReference type="BioGRID-ORCS" id="42618">
    <property type="hits" value="0 hits in 1 CRISPR screen"/>
</dbReference>
<dbReference type="GenomeRNAi" id="42618"/>
<dbReference type="PRO" id="PR:Q9VD26"/>
<dbReference type="Proteomes" id="UP000000803">
    <property type="component" value="Chromosome 3R"/>
</dbReference>
<dbReference type="Bgee" id="FBgn0038950">
    <property type="expression patterns" value="Expressed in saliva-secreting gland and 134 other cell types or tissues"/>
</dbReference>
<dbReference type="ExpressionAtlas" id="Q9VD26">
    <property type="expression patterns" value="baseline and differential"/>
</dbReference>
<dbReference type="GO" id="GO:0012505">
    <property type="term" value="C:endomembrane system"/>
    <property type="evidence" value="ECO:0007005"/>
    <property type="project" value="FlyBase"/>
</dbReference>
<dbReference type="GO" id="GO:0005794">
    <property type="term" value="C:Golgi apparatus"/>
    <property type="evidence" value="ECO:0000318"/>
    <property type="project" value="GO_Central"/>
</dbReference>
<dbReference type="GO" id="GO:0016020">
    <property type="term" value="C:membrane"/>
    <property type="evidence" value="ECO:0007669"/>
    <property type="project" value="UniProtKB-SubCell"/>
</dbReference>
<dbReference type="GO" id="GO:0008270">
    <property type="term" value="F:zinc ion binding"/>
    <property type="evidence" value="ECO:0000255"/>
    <property type="project" value="FlyBase"/>
</dbReference>
<dbReference type="CDD" id="cd16487">
    <property type="entry name" value="mRING-H2-C3DHC3_ZFPL1"/>
    <property type="match status" value="1"/>
</dbReference>
<dbReference type="Gene3D" id="3.30.40.10">
    <property type="entry name" value="Zinc/RING finger domain, C3HC4 (zinc finger)"/>
    <property type="match status" value="1"/>
</dbReference>
<dbReference type="InterPro" id="IPR039043">
    <property type="entry name" value="ZFPL1"/>
</dbReference>
<dbReference type="InterPro" id="IPR001841">
    <property type="entry name" value="Znf_RING"/>
</dbReference>
<dbReference type="InterPro" id="IPR013083">
    <property type="entry name" value="Znf_RING/FYVE/PHD"/>
</dbReference>
<dbReference type="PANTHER" id="PTHR12981">
    <property type="entry name" value="ZINC FINGER PROTEIN-LIKE 1"/>
    <property type="match status" value="1"/>
</dbReference>
<dbReference type="PANTHER" id="PTHR12981:SF0">
    <property type="entry name" value="ZINC FINGER PROTEIN-LIKE 1"/>
    <property type="match status" value="1"/>
</dbReference>
<dbReference type="SMART" id="SM00184">
    <property type="entry name" value="RING"/>
    <property type="match status" value="1"/>
</dbReference>
<dbReference type="SUPFAM" id="SSF57850">
    <property type="entry name" value="RING/U-box"/>
    <property type="match status" value="1"/>
</dbReference>
<dbReference type="PROSITE" id="PS50089">
    <property type="entry name" value="ZF_RING_2"/>
    <property type="match status" value="1"/>
</dbReference>
<keyword id="KW-0472">Membrane</keyword>
<keyword id="KW-0479">Metal-binding</keyword>
<keyword id="KW-0597">Phosphoprotein</keyword>
<keyword id="KW-1185">Reference proteome</keyword>
<keyword id="KW-0812">Transmembrane</keyword>
<keyword id="KW-1133">Transmembrane helix</keyword>
<keyword id="KW-0862">Zinc</keyword>
<keyword id="KW-0863">Zinc-finger</keyword>
<proteinExistence type="evidence at protein level"/>